<feature type="chain" id="PRO_0000129327" description="Large ribosomal subunit protein uL4">
    <location>
        <begin position="1"/>
        <end position="272"/>
    </location>
</feature>
<accession>Q9YFM1</accession>
<protein>
    <recommendedName>
        <fullName evidence="1">Large ribosomal subunit protein uL4</fullName>
    </recommendedName>
    <alternativeName>
        <fullName evidence="2">50S ribosomal protein L4</fullName>
    </alternativeName>
</protein>
<gene>
    <name evidence="1" type="primary">rpl4</name>
    <name type="ordered locus">APE_0228.1</name>
</gene>
<comment type="function">
    <text evidence="1">One of the primary rRNA binding proteins, this protein initially binds near the 5'-end of the 23S rRNA. It is important during the early stages of 50S assembly. It makes multiple contacts with different domains of the 23S rRNA in the assembled 50S subunit and ribosome.</text>
</comment>
<comment type="function">
    <text evidence="1">Forms part of the polypeptide exit tunnel.</text>
</comment>
<comment type="subunit">
    <text evidence="1">Part of the 50S ribosomal subunit.</text>
</comment>
<comment type="similarity">
    <text evidence="1">Belongs to the universal ribosomal protein uL4 family.</text>
</comment>
<reference key="1">
    <citation type="journal article" date="1999" name="DNA Res.">
        <title>Complete genome sequence of an aerobic hyper-thermophilic crenarchaeon, Aeropyrum pernix K1.</title>
        <authorList>
            <person name="Kawarabayasi Y."/>
            <person name="Hino Y."/>
            <person name="Horikawa H."/>
            <person name="Yamazaki S."/>
            <person name="Haikawa Y."/>
            <person name="Jin-no K."/>
            <person name="Takahashi M."/>
            <person name="Sekine M."/>
            <person name="Baba S."/>
            <person name="Ankai A."/>
            <person name="Kosugi H."/>
            <person name="Hosoyama A."/>
            <person name="Fukui S."/>
            <person name="Nagai Y."/>
            <person name="Nishijima K."/>
            <person name="Nakazawa H."/>
            <person name="Takamiya M."/>
            <person name="Masuda S."/>
            <person name="Funahashi T."/>
            <person name="Tanaka T."/>
            <person name="Kudoh Y."/>
            <person name="Yamazaki J."/>
            <person name="Kushida N."/>
            <person name="Oguchi A."/>
            <person name="Aoki K."/>
            <person name="Kubota K."/>
            <person name="Nakamura Y."/>
            <person name="Nomura N."/>
            <person name="Sako Y."/>
            <person name="Kikuchi H."/>
        </authorList>
    </citation>
    <scope>NUCLEOTIDE SEQUENCE [LARGE SCALE GENOMIC DNA]</scope>
    <source>
        <strain>ATCC 700893 / DSM 11879 / JCM 9820 / NBRC 100138 / K1</strain>
    </source>
</reference>
<dbReference type="EMBL" id="BA000002">
    <property type="protein sequence ID" value="BAA79140.2"/>
    <property type="molecule type" value="Genomic_DNA"/>
</dbReference>
<dbReference type="PIR" id="B72780">
    <property type="entry name" value="B72780"/>
</dbReference>
<dbReference type="SMR" id="Q9YFM1"/>
<dbReference type="STRING" id="272557.APE_0228.1"/>
<dbReference type="EnsemblBacteria" id="BAA79140">
    <property type="protein sequence ID" value="BAA79140"/>
    <property type="gene ID" value="APE_0228.1"/>
</dbReference>
<dbReference type="KEGG" id="ape:APE_0228.1"/>
<dbReference type="PATRIC" id="fig|272557.25.peg.162"/>
<dbReference type="eggNOG" id="arCOG04071">
    <property type="taxonomic scope" value="Archaea"/>
</dbReference>
<dbReference type="Proteomes" id="UP000002518">
    <property type="component" value="Chromosome"/>
</dbReference>
<dbReference type="GO" id="GO:1990904">
    <property type="term" value="C:ribonucleoprotein complex"/>
    <property type="evidence" value="ECO:0007669"/>
    <property type="project" value="UniProtKB-KW"/>
</dbReference>
<dbReference type="GO" id="GO:0005840">
    <property type="term" value="C:ribosome"/>
    <property type="evidence" value="ECO:0007669"/>
    <property type="project" value="UniProtKB-KW"/>
</dbReference>
<dbReference type="GO" id="GO:0019843">
    <property type="term" value="F:rRNA binding"/>
    <property type="evidence" value="ECO:0007669"/>
    <property type="project" value="UniProtKB-UniRule"/>
</dbReference>
<dbReference type="GO" id="GO:0003735">
    <property type="term" value="F:structural constituent of ribosome"/>
    <property type="evidence" value="ECO:0007669"/>
    <property type="project" value="InterPro"/>
</dbReference>
<dbReference type="GO" id="GO:0006412">
    <property type="term" value="P:translation"/>
    <property type="evidence" value="ECO:0007669"/>
    <property type="project" value="UniProtKB-UniRule"/>
</dbReference>
<dbReference type="Gene3D" id="3.40.1370.10">
    <property type="match status" value="1"/>
</dbReference>
<dbReference type="HAMAP" id="MF_01328_A">
    <property type="entry name" value="Ribosomal_uL4_A"/>
    <property type="match status" value="1"/>
</dbReference>
<dbReference type="InterPro" id="IPR002136">
    <property type="entry name" value="Ribosomal_uL4"/>
</dbReference>
<dbReference type="InterPro" id="IPR023574">
    <property type="entry name" value="Ribosomal_uL4_dom_sf"/>
</dbReference>
<dbReference type="InterPro" id="IPR013000">
    <property type="entry name" value="Ribosomal_uL4_euk/arc_CS"/>
</dbReference>
<dbReference type="InterPro" id="IPR045240">
    <property type="entry name" value="Ribosomal_uL4_euk/arch"/>
</dbReference>
<dbReference type="InterPro" id="IPR019970">
    <property type="entry name" value="Ribosomall_uL4-arc"/>
</dbReference>
<dbReference type="NCBIfam" id="TIGR03672">
    <property type="entry name" value="rpl4p_arch"/>
    <property type="match status" value="1"/>
</dbReference>
<dbReference type="PANTHER" id="PTHR19431">
    <property type="entry name" value="60S RIBOSOMAL PROTEIN L4"/>
    <property type="match status" value="1"/>
</dbReference>
<dbReference type="Pfam" id="PF00573">
    <property type="entry name" value="Ribosomal_L4"/>
    <property type="match status" value="1"/>
</dbReference>
<dbReference type="SUPFAM" id="SSF52166">
    <property type="entry name" value="Ribosomal protein L4"/>
    <property type="match status" value="1"/>
</dbReference>
<dbReference type="PROSITE" id="PS00939">
    <property type="entry name" value="RIBOSOMAL_L1E"/>
    <property type="match status" value="1"/>
</dbReference>
<evidence type="ECO:0000255" key="1">
    <source>
        <dbReference type="HAMAP-Rule" id="MF_01328"/>
    </source>
</evidence>
<evidence type="ECO:0000305" key="2"/>
<organism>
    <name type="scientific">Aeropyrum pernix (strain ATCC 700893 / DSM 11879 / JCM 9820 / NBRC 100138 / K1)</name>
    <dbReference type="NCBI Taxonomy" id="272557"/>
    <lineage>
        <taxon>Archaea</taxon>
        <taxon>Thermoproteota</taxon>
        <taxon>Thermoprotei</taxon>
        <taxon>Desulfurococcales</taxon>
        <taxon>Desulfurococcaceae</taxon>
        <taxon>Aeropyrum</taxon>
    </lineage>
</organism>
<name>RL4_AERPE</name>
<proteinExistence type="inferred from homology"/>
<keyword id="KW-1185">Reference proteome</keyword>
<keyword id="KW-0687">Ribonucleoprotein</keyword>
<keyword id="KW-0689">Ribosomal protein</keyword>
<keyword id="KW-0694">RNA-binding</keyword>
<keyword id="KW-0699">rRNA-binding</keyword>
<sequence length="272" mass="30215">MAYTYMTLYMEQEKIVPVYDERGGEKDSVVLPQIFRFPVRKDLIRRAFLSEFTARLQPKGRDPMAGKRTSAVSLGVGRGVARVPRIKGSLRAALVNMARGGRAAHPPRVEKVLKEYINKKEKRLATISAISATSREDLVRQRGHRFSAETLPIVLDSSVLAKISTAREARSLLESVGVYEDVLRAKEGKRYNAGKGKMRGRRYKVPKSVLFVLEDPRSPLALAVKGMPGVDVVTPTLLSVLHLAPGGHPGRLTIYTTEALKLLSRRFEVTLP</sequence>